<evidence type="ECO:0000250" key="1"/>
<evidence type="ECO:0000255" key="2">
    <source>
        <dbReference type="PROSITE-ProRule" id="PRU00698"/>
    </source>
</evidence>
<evidence type="ECO:0000256" key="3">
    <source>
        <dbReference type="SAM" id="MobiDB-lite"/>
    </source>
</evidence>
<evidence type="ECO:0000305" key="4"/>
<protein>
    <recommendedName>
        <fullName>Pre-mRNA-splicing factor cwc22</fullName>
    </recommendedName>
    <alternativeName>
        <fullName>mRNA-splicing protein-1</fullName>
    </alternativeName>
</protein>
<accession>Q7RX84</accession>
<proteinExistence type="inferred from homology"/>
<keyword id="KW-0963">Cytoplasm</keyword>
<keyword id="KW-0507">mRNA processing</keyword>
<keyword id="KW-0508">mRNA splicing</keyword>
<keyword id="KW-0539">Nucleus</keyword>
<keyword id="KW-1185">Reference proteome</keyword>
<keyword id="KW-0747">Spliceosome</keyword>
<comment type="function">
    <text evidence="1">Involved in pre-mRNA splicing.</text>
</comment>
<comment type="subunit">
    <text evidence="1">Associated with the spliceosome.</text>
</comment>
<comment type="subcellular location">
    <subcellularLocation>
        <location evidence="1">Cytoplasm</location>
    </subcellularLocation>
    <subcellularLocation>
        <location evidence="1">Nucleus</location>
    </subcellularLocation>
</comment>
<comment type="similarity">
    <text evidence="4">Belongs to the CWC22 family.</text>
</comment>
<organism>
    <name type="scientific">Neurospora crassa (strain ATCC 24698 / 74-OR23-1A / CBS 708.71 / DSM 1257 / FGSC 987)</name>
    <dbReference type="NCBI Taxonomy" id="367110"/>
    <lineage>
        <taxon>Eukaryota</taxon>
        <taxon>Fungi</taxon>
        <taxon>Dikarya</taxon>
        <taxon>Ascomycota</taxon>
        <taxon>Pezizomycotina</taxon>
        <taxon>Sordariomycetes</taxon>
        <taxon>Sordariomycetidae</taxon>
        <taxon>Sordariales</taxon>
        <taxon>Sordariaceae</taxon>
        <taxon>Neurospora</taxon>
    </lineage>
</organism>
<reference key="1">
    <citation type="journal article" date="2003" name="Nature">
        <title>The genome sequence of the filamentous fungus Neurospora crassa.</title>
        <authorList>
            <person name="Galagan J.E."/>
            <person name="Calvo S.E."/>
            <person name="Borkovich K.A."/>
            <person name="Selker E.U."/>
            <person name="Read N.D."/>
            <person name="Jaffe D.B."/>
            <person name="FitzHugh W."/>
            <person name="Ma L.-J."/>
            <person name="Smirnov S."/>
            <person name="Purcell S."/>
            <person name="Rehman B."/>
            <person name="Elkins T."/>
            <person name="Engels R."/>
            <person name="Wang S."/>
            <person name="Nielsen C.B."/>
            <person name="Butler J."/>
            <person name="Endrizzi M."/>
            <person name="Qui D."/>
            <person name="Ianakiev P."/>
            <person name="Bell-Pedersen D."/>
            <person name="Nelson M.A."/>
            <person name="Werner-Washburne M."/>
            <person name="Selitrennikoff C.P."/>
            <person name="Kinsey J.A."/>
            <person name="Braun E.L."/>
            <person name="Zelter A."/>
            <person name="Schulte U."/>
            <person name="Kothe G.O."/>
            <person name="Jedd G."/>
            <person name="Mewes H.-W."/>
            <person name="Staben C."/>
            <person name="Marcotte E."/>
            <person name="Greenberg D."/>
            <person name="Roy A."/>
            <person name="Foley K."/>
            <person name="Naylor J."/>
            <person name="Stange-Thomann N."/>
            <person name="Barrett R."/>
            <person name="Gnerre S."/>
            <person name="Kamal M."/>
            <person name="Kamvysselis M."/>
            <person name="Mauceli E.W."/>
            <person name="Bielke C."/>
            <person name="Rudd S."/>
            <person name="Frishman D."/>
            <person name="Krystofova S."/>
            <person name="Rasmussen C."/>
            <person name="Metzenberg R.L."/>
            <person name="Perkins D.D."/>
            <person name="Kroken S."/>
            <person name="Cogoni C."/>
            <person name="Macino G."/>
            <person name="Catcheside D.E.A."/>
            <person name="Li W."/>
            <person name="Pratt R.J."/>
            <person name="Osmani S.A."/>
            <person name="DeSouza C.P.C."/>
            <person name="Glass N.L."/>
            <person name="Orbach M.J."/>
            <person name="Berglund J.A."/>
            <person name="Voelker R."/>
            <person name="Yarden O."/>
            <person name="Plamann M."/>
            <person name="Seiler S."/>
            <person name="Dunlap J.C."/>
            <person name="Radford A."/>
            <person name="Aramayo R."/>
            <person name="Natvig D.O."/>
            <person name="Alex L.A."/>
            <person name="Mannhaupt G."/>
            <person name="Ebbole D.J."/>
            <person name="Freitag M."/>
            <person name="Paulsen I."/>
            <person name="Sachs M.S."/>
            <person name="Lander E.S."/>
            <person name="Nusbaum C."/>
            <person name="Birren B.W."/>
        </authorList>
    </citation>
    <scope>NUCLEOTIDE SEQUENCE [LARGE SCALE GENOMIC DNA]</scope>
    <source>
        <strain>ATCC 24698 / 74-OR23-1A / CBS 708.71 / DSM 1257 / FGSC 987</strain>
    </source>
</reference>
<gene>
    <name type="primary">msp-1</name>
    <name type="synonym">cwc22</name>
    <name type="ORF">NCU00066</name>
</gene>
<sequence length="1010" mass="114000">MASADMSPSRSHPHDATRSPSPRTQSPSPRDEDGSRSPGERTPSPPSRDPSPYRSPGERTPSPSPRRDRSLSPRDQPHSHPRSRSPTPRSQSPSRRSVRSPSPRQGSPARRVDRSSSPRARSPPPRRHSRSPPLRGQPPPPRHRDAGGDYRPVRKERTPTPPPVAVKTEEEKLADARAEYQKLLNLRSQGVYLPPHRLRALQAAITDKKTREYQRMAWEALKKSVNGLVNKVNTANIKFVVPELFGENLIRGRGLFCQSLLKAQHASLPFTPIYACLAAICNTKLPQVGELLVKRLVLRFRKAFKRNDKAVCLSSTMFIAHLVNNQVVHEMIAAQILLLLLAKPTDDSVEIAVGLMREVGLFLEEMSPAIAHAVFDQFRNILHEADIDRRTQYMIEVLFQVRKDKYKDNPVIKEELDLVEEEDQITHRIGLDDEIDPQDGLNVFKMDPNWEENEEEYKKLKAEILGEASDDDEDDDDDDESESGSESEDEEQKALEIKDQSNADLVNLRRTIYLSIQSSADPEEAAHKLMKLRLPAGQEAELVSMIVESCAQEKVYLKFMGLLGERFARLNRMWMDLFEESFAKYYSTIHRYETNKLRNIARFFGHLLATDAIGWHVFSVIHLNEEETTSASRIFIKILFEDLQENIGSAKLKARMSEETLQPSLQGIFPHDEPRNIRFSINYFTSIKMGYLTDEMRTFLANMPKPALPAPPADSDSESVSSYSSYSSYSSRSRSRSLTPRKDTRGRSLSRTPPRRGRGRSYSRTPSRSRSRSRSYSRSVSKSVSRSPPRRRAVESRSPSPPPRGRGRSYDRYSRSPSRSRSRTRSPAAAPPIRRGRSGTRSRSRSYSRSPSPPPARGYPTRGRAPVSNNDRAAAASGKRRREGSYSASRSPHPPPQQRLRRGSYSRSRSRSPIPIRGNGPAGRDTGRAGPAPARGGRRNRSYSRSRTRSPPPLADAATGSRRVVSRSPSPVVGNNKRRRSYSSSRSRSRSSSRSRYRSRSPVAKRGRVD</sequence>
<feature type="chain" id="PRO_0000215674" description="Pre-mRNA-splicing factor cwc22">
    <location>
        <begin position="1"/>
        <end position="1010"/>
    </location>
</feature>
<feature type="domain" description="MIF4G" evidence="2">
    <location>
        <begin position="222"/>
        <end position="405"/>
    </location>
</feature>
<feature type="domain" description="MI" evidence="2">
    <location>
        <begin position="507"/>
        <end position="623"/>
    </location>
</feature>
<feature type="region of interest" description="Disordered" evidence="3">
    <location>
        <begin position="1"/>
        <end position="166"/>
    </location>
</feature>
<feature type="region of interest" description="Disordered" evidence="3">
    <location>
        <begin position="466"/>
        <end position="498"/>
    </location>
</feature>
<feature type="region of interest" description="Disordered" evidence="3">
    <location>
        <begin position="708"/>
        <end position="1010"/>
    </location>
</feature>
<feature type="compositionally biased region" description="Polar residues" evidence="3">
    <location>
        <begin position="1"/>
        <end position="10"/>
    </location>
</feature>
<feature type="compositionally biased region" description="Low complexity" evidence="3">
    <location>
        <begin position="18"/>
        <end position="28"/>
    </location>
</feature>
<feature type="compositionally biased region" description="Basic and acidic residues" evidence="3">
    <location>
        <begin position="29"/>
        <end position="39"/>
    </location>
</feature>
<feature type="compositionally biased region" description="Basic and acidic residues" evidence="3">
    <location>
        <begin position="65"/>
        <end position="78"/>
    </location>
</feature>
<feature type="compositionally biased region" description="Low complexity" evidence="3">
    <location>
        <begin position="84"/>
        <end position="109"/>
    </location>
</feature>
<feature type="compositionally biased region" description="Basic and acidic residues" evidence="3">
    <location>
        <begin position="142"/>
        <end position="158"/>
    </location>
</feature>
<feature type="compositionally biased region" description="Acidic residues" evidence="3">
    <location>
        <begin position="468"/>
        <end position="491"/>
    </location>
</feature>
<feature type="compositionally biased region" description="Low complexity" evidence="3">
    <location>
        <begin position="718"/>
        <end position="732"/>
    </location>
</feature>
<feature type="compositionally biased region" description="Basic residues" evidence="3">
    <location>
        <begin position="753"/>
        <end position="775"/>
    </location>
</feature>
<feature type="compositionally biased region" description="Low complexity" evidence="3">
    <location>
        <begin position="776"/>
        <end position="787"/>
    </location>
</feature>
<feature type="compositionally biased region" description="Basic residues" evidence="3">
    <location>
        <begin position="834"/>
        <end position="846"/>
    </location>
</feature>
<feature type="compositionally biased region" description="Basic residues" evidence="3">
    <location>
        <begin position="899"/>
        <end position="910"/>
    </location>
</feature>
<feature type="compositionally biased region" description="Low complexity" evidence="3">
    <location>
        <begin position="911"/>
        <end position="935"/>
    </location>
</feature>
<feature type="compositionally biased region" description="Basic residues" evidence="3">
    <location>
        <begin position="936"/>
        <end position="948"/>
    </location>
</feature>
<feature type="compositionally biased region" description="Low complexity" evidence="3">
    <location>
        <begin position="961"/>
        <end position="973"/>
    </location>
</feature>
<feature type="compositionally biased region" description="Basic residues" evidence="3">
    <location>
        <begin position="976"/>
        <end position="1010"/>
    </location>
</feature>
<dbReference type="EMBL" id="CM002238">
    <property type="protein sequence ID" value="EAA27140.3"/>
    <property type="molecule type" value="Genomic_DNA"/>
</dbReference>
<dbReference type="RefSeq" id="XP_956376.3">
    <property type="nucleotide sequence ID" value="XM_951283.3"/>
</dbReference>
<dbReference type="SMR" id="Q7RX84"/>
<dbReference type="STRING" id="367110.Q7RX84"/>
<dbReference type="PaxDb" id="5141-EFNCRP00000000380"/>
<dbReference type="EnsemblFungi" id="EAA27140">
    <property type="protein sequence ID" value="EAA27140"/>
    <property type="gene ID" value="NCU00066"/>
</dbReference>
<dbReference type="GeneID" id="3872537"/>
<dbReference type="KEGG" id="ncr:NCU00066"/>
<dbReference type="VEuPathDB" id="FungiDB:NCU00066"/>
<dbReference type="HOGENOM" id="CLU_006308_0_2_1"/>
<dbReference type="InParanoid" id="Q7RX84"/>
<dbReference type="OrthoDB" id="3938623at2759"/>
<dbReference type="Proteomes" id="UP000001805">
    <property type="component" value="Chromosome 3, Linkage Group III"/>
</dbReference>
<dbReference type="GO" id="GO:0071013">
    <property type="term" value="C:catalytic step 2 spliceosome"/>
    <property type="evidence" value="ECO:0000318"/>
    <property type="project" value="GO_Central"/>
</dbReference>
<dbReference type="GO" id="GO:0005737">
    <property type="term" value="C:cytoplasm"/>
    <property type="evidence" value="ECO:0007669"/>
    <property type="project" value="UniProtKB-SubCell"/>
</dbReference>
<dbReference type="GO" id="GO:0003723">
    <property type="term" value="F:RNA binding"/>
    <property type="evidence" value="ECO:0000318"/>
    <property type="project" value="GO_Central"/>
</dbReference>
<dbReference type="GO" id="GO:0000398">
    <property type="term" value="P:mRNA splicing, via spliceosome"/>
    <property type="evidence" value="ECO:0000318"/>
    <property type="project" value="GO_Central"/>
</dbReference>
<dbReference type="FunFam" id="1.25.40.180:FF:000004">
    <property type="entry name" value="pre-mRNA-splicing factor CWC22 homolog"/>
    <property type="match status" value="1"/>
</dbReference>
<dbReference type="Gene3D" id="1.25.40.180">
    <property type="match status" value="1"/>
</dbReference>
<dbReference type="InterPro" id="IPR016024">
    <property type="entry name" value="ARM-type_fold"/>
</dbReference>
<dbReference type="InterPro" id="IPR050781">
    <property type="entry name" value="CWC22_splicing_factor"/>
</dbReference>
<dbReference type="InterPro" id="IPR003891">
    <property type="entry name" value="Initiation_fac_eIF4g_MI"/>
</dbReference>
<dbReference type="InterPro" id="IPR003890">
    <property type="entry name" value="MIF4G-like_typ-3"/>
</dbReference>
<dbReference type="PANTHER" id="PTHR18034">
    <property type="entry name" value="CELL CYCLE CONTROL PROTEIN CWF22-RELATED"/>
    <property type="match status" value="1"/>
</dbReference>
<dbReference type="PANTHER" id="PTHR18034:SF3">
    <property type="entry name" value="PRE-MRNA-SPLICING FACTOR CWC22 HOMOLOG"/>
    <property type="match status" value="1"/>
</dbReference>
<dbReference type="Pfam" id="PF02847">
    <property type="entry name" value="MA3"/>
    <property type="match status" value="1"/>
</dbReference>
<dbReference type="Pfam" id="PF02854">
    <property type="entry name" value="MIF4G"/>
    <property type="match status" value="1"/>
</dbReference>
<dbReference type="SMART" id="SM00544">
    <property type="entry name" value="MA3"/>
    <property type="match status" value="1"/>
</dbReference>
<dbReference type="SMART" id="SM00543">
    <property type="entry name" value="MIF4G"/>
    <property type="match status" value="1"/>
</dbReference>
<dbReference type="SUPFAM" id="SSF48371">
    <property type="entry name" value="ARM repeat"/>
    <property type="match status" value="1"/>
</dbReference>
<dbReference type="PROSITE" id="PS51366">
    <property type="entry name" value="MI"/>
    <property type="match status" value="1"/>
</dbReference>
<name>CWC22_NEUCR</name>